<proteinExistence type="evidence at protein level"/>
<keyword id="KW-0007">Acetylation</keyword>
<keyword id="KW-0025">Alternative splicing</keyword>
<keyword id="KW-0472">Membrane</keyword>
<keyword id="KW-0597">Phosphoprotein</keyword>
<keyword id="KW-0653">Protein transport</keyword>
<keyword id="KW-1185">Reference proteome</keyword>
<keyword id="KW-0813">Transport</keyword>
<protein>
    <recommendedName>
        <fullName evidence="7">TOM1-like protein 1</fullName>
    </recommendedName>
</protein>
<accession>Q9LFL3</accession>
<sequence>MGDNLMDKVTAFGERLKIGGSEVSNKISAGVSSMSFKVKELFQGPNPTDKIVEDATTENLEEPDWDMNLEICDMINQETINSVELIRGIKKRIMMKQPRIQYLALVLLETCVKNCEKAFSEVAAERVLDEMVKLIDDPQTVVNNRNKALMLIEAWGESTSELRYLPVFEETYKSLKARGIRFPGRDNESLAPIFTPARSTPAPELNADLPQHVHEPAHIQYDVPVRSFTAEQTKEAFDIARNSIELLSTVLSSSPQHDALQDDLTTTLVQQCRQSQTTVQRIIETAGENEALLFEALNVNDELVKTLSKYEEMNKPSAPLTSHEPAMIPVAEEPDDSPIHGREESLVRKSSGVRGGFHGGGGSGDDMMDDLDEMIFGKKNGCDSSTNPDHDPKKEQSSSKNDDLIRF</sequence>
<reference key="1">
    <citation type="journal article" date="2000" name="Nature">
        <title>Sequence and analysis of chromosome 5 of the plant Arabidopsis thaliana.</title>
        <authorList>
            <person name="Tabata S."/>
            <person name="Kaneko T."/>
            <person name="Nakamura Y."/>
            <person name="Kotani H."/>
            <person name="Kato T."/>
            <person name="Asamizu E."/>
            <person name="Miyajima N."/>
            <person name="Sasamoto S."/>
            <person name="Kimura T."/>
            <person name="Hosouchi T."/>
            <person name="Kawashima K."/>
            <person name="Kohara M."/>
            <person name="Matsumoto M."/>
            <person name="Matsuno A."/>
            <person name="Muraki A."/>
            <person name="Nakayama S."/>
            <person name="Nakazaki N."/>
            <person name="Naruo K."/>
            <person name="Okumura S."/>
            <person name="Shinpo S."/>
            <person name="Takeuchi C."/>
            <person name="Wada T."/>
            <person name="Watanabe A."/>
            <person name="Yamada M."/>
            <person name="Yasuda M."/>
            <person name="Sato S."/>
            <person name="de la Bastide M."/>
            <person name="Huang E."/>
            <person name="Spiegel L."/>
            <person name="Gnoj L."/>
            <person name="O'Shaughnessy A."/>
            <person name="Preston R."/>
            <person name="Habermann K."/>
            <person name="Murray J."/>
            <person name="Johnson D."/>
            <person name="Rohlfing T."/>
            <person name="Nelson J."/>
            <person name="Stoneking T."/>
            <person name="Pepin K."/>
            <person name="Spieth J."/>
            <person name="Sekhon M."/>
            <person name="Armstrong J."/>
            <person name="Becker M."/>
            <person name="Belter E."/>
            <person name="Cordum H."/>
            <person name="Cordes M."/>
            <person name="Courtney L."/>
            <person name="Courtney W."/>
            <person name="Dante M."/>
            <person name="Du H."/>
            <person name="Edwards J."/>
            <person name="Fryman J."/>
            <person name="Haakensen B."/>
            <person name="Lamar E."/>
            <person name="Latreille P."/>
            <person name="Leonard S."/>
            <person name="Meyer R."/>
            <person name="Mulvaney E."/>
            <person name="Ozersky P."/>
            <person name="Riley A."/>
            <person name="Strowmatt C."/>
            <person name="Wagner-McPherson C."/>
            <person name="Wollam A."/>
            <person name="Yoakum M."/>
            <person name="Bell M."/>
            <person name="Dedhia N."/>
            <person name="Parnell L."/>
            <person name="Shah R."/>
            <person name="Rodriguez M."/>
            <person name="Hoon See L."/>
            <person name="Vil D."/>
            <person name="Baker J."/>
            <person name="Kirchoff K."/>
            <person name="Toth K."/>
            <person name="King L."/>
            <person name="Bahret A."/>
            <person name="Miller B."/>
            <person name="Marra M.A."/>
            <person name="Martienssen R."/>
            <person name="McCombie W.R."/>
            <person name="Wilson R.K."/>
            <person name="Murphy G."/>
            <person name="Bancroft I."/>
            <person name="Volckaert G."/>
            <person name="Wambutt R."/>
            <person name="Duesterhoeft A."/>
            <person name="Stiekema W."/>
            <person name="Pohl T."/>
            <person name="Entian K.-D."/>
            <person name="Terryn N."/>
            <person name="Hartley N."/>
            <person name="Bent E."/>
            <person name="Johnson S."/>
            <person name="Langham S.-A."/>
            <person name="McCullagh B."/>
            <person name="Robben J."/>
            <person name="Grymonprez B."/>
            <person name="Zimmermann W."/>
            <person name="Ramsperger U."/>
            <person name="Wedler H."/>
            <person name="Balke K."/>
            <person name="Wedler E."/>
            <person name="Peters S."/>
            <person name="van Staveren M."/>
            <person name="Dirkse W."/>
            <person name="Mooijman P."/>
            <person name="Klein Lankhorst R."/>
            <person name="Weitzenegger T."/>
            <person name="Bothe G."/>
            <person name="Rose M."/>
            <person name="Hauf J."/>
            <person name="Berneiser S."/>
            <person name="Hempel S."/>
            <person name="Feldpausch M."/>
            <person name="Lamberth S."/>
            <person name="Villarroel R."/>
            <person name="Gielen J."/>
            <person name="Ardiles W."/>
            <person name="Bents O."/>
            <person name="Lemcke K."/>
            <person name="Kolesov G."/>
            <person name="Mayer K.F.X."/>
            <person name="Rudd S."/>
            <person name="Schoof H."/>
            <person name="Schueller C."/>
            <person name="Zaccaria P."/>
            <person name="Mewes H.-W."/>
            <person name="Bevan M."/>
            <person name="Fransz P.F."/>
        </authorList>
    </citation>
    <scope>NUCLEOTIDE SEQUENCE [LARGE SCALE GENOMIC DNA]</scope>
    <source>
        <strain>cv. Columbia</strain>
    </source>
</reference>
<reference key="2">
    <citation type="journal article" date="2017" name="Plant J.">
        <title>Araport11: a complete reannotation of the Arabidopsis thaliana reference genome.</title>
        <authorList>
            <person name="Cheng C.Y."/>
            <person name="Krishnakumar V."/>
            <person name="Chan A.P."/>
            <person name="Thibaud-Nissen F."/>
            <person name="Schobel S."/>
            <person name="Town C.D."/>
        </authorList>
    </citation>
    <scope>GENOME REANNOTATION</scope>
    <source>
        <strain>cv. Columbia</strain>
    </source>
</reference>
<reference key="3">
    <citation type="journal article" date="2003" name="Science">
        <title>Empirical analysis of transcriptional activity in the Arabidopsis genome.</title>
        <authorList>
            <person name="Yamada K."/>
            <person name="Lim J."/>
            <person name="Dale J.M."/>
            <person name="Chen H."/>
            <person name="Shinn P."/>
            <person name="Palm C.J."/>
            <person name="Southwick A.M."/>
            <person name="Wu H.C."/>
            <person name="Kim C.J."/>
            <person name="Nguyen M."/>
            <person name="Pham P.K."/>
            <person name="Cheuk R.F."/>
            <person name="Karlin-Newmann G."/>
            <person name="Liu S.X."/>
            <person name="Lam B."/>
            <person name="Sakano H."/>
            <person name="Wu T."/>
            <person name="Yu G."/>
            <person name="Miranda M."/>
            <person name="Quach H.L."/>
            <person name="Tripp M."/>
            <person name="Chang C.H."/>
            <person name="Lee J.M."/>
            <person name="Toriumi M.J."/>
            <person name="Chan M.M."/>
            <person name="Tang C.C."/>
            <person name="Onodera C.S."/>
            <person name="Deng J.M."/>
            <person name="Akiyama K."/>
            <person name="Ansari Y."/>
            <person name="Arakawa T."/>
            <person name="Banh J."/>
            <person name="Banno F."/>
            <person name="Bowser L."/>
            <person name="Brooks S.Y."/>
            <person name="Carninci P."/>
            <person name="Chao Q."/>
            <person name="Choy N."/>
            <person name="Enju A."/>
            <person name="Goldsmith A.D."/>
            <person name="Gurjal M."/>
            <person name="Hansen N.F."/>
            <person name="Hayashizaki Y."/>
            <person name="Johnson-Hopson C."/>
            <person name="Hsuan V.W."/>
            <person name="Iida K."/>
            <person name="Karnes M."/>
            <person name="Khan S."/>
            <person name="Koesema E."/>
            <person name="Ishida J."/>
            <person name="Jiang P.X."/>
            <person name="Jones T."/>
            <person name="Kawai J."/>
            <person name="Kamiya A."/>
            <person name="Meyers C."/>
            <person name="Nakajima M."/>
            <person name="Narusaka M."/>
            <person name="Seki M."/>
            <person name="Sakurai T."/>
            <person name="Satou M."/>
            <person name="Tamse R."/>
            <person name="Vaysberg M."/>
            <person name="Wallender E.K."/>
            <person name="Wong C."/>
            <person name="Yamamura Y."/>
            <person name="Yuan S."/>
            <person name="Shinozaki K."/>
            <person name="Davis R.W."/>
            <person name="Theologis A."/>
            <person name="Ecker J.R."/>
        </authorList>
    </citation>
    <scope>NUCLEOTIDE SEQUENCE [LARGE SCALE MRNA]</scope>
    <source>
        <strain>cv. Columbia</strain>
    </source>
</reference>
<reference key="4">
    <citation type="submission" date="2002-03" db="EMBL/GenBank/DDBJ databases">
        <title>Full-length cDNA from Arabidopsis thaliana.</title>
        <authorList>
            <person name="Brover V.V."/>
            <person name="Troukhan M.E."/>
            <person name="Alexandrov N.A."/>
            <person name="Lu Y.-P."/>
            <person name="Flavell R.B."/>
            <person name="Feldmann K.A."/>
        </authorList>
    </citation>
    <scope>NUCLEOTIDE SEQUENCE [LARGE SCALE MRNA]</scope>
</reference>
<reference key="5">
    <citation type="journal article" date="2006" name="Trends Plant Sci.">
        <title>Exploring the ESCRTing machinery in eukaryotes.</title>
        <authorList>
            <person name="Winter V."/>
            <person name="Hauser M.-T."/>
        </authorList>
    </citation>
    <scope>GENE FAMILY</scope>
    <scope>REVIEW</scope>
</reference>
<reference key="6">
    <citation type="journal article" date="2009" name="Plant Physiol.">
        <title>Large-scale Arabidopsis phosphoproteome profiling reveals novel chloroplast kinase substrates and phosphorylation networks.</title>
        <authorList>
            <person name="Reiland S."/>
            <person name="Messerli G."/>
            <person name="Baerenfaller K."/>
            <person name="Gerrits B."/>
            <person name="Endler A."/>
            <person name="Grossmann J."/>
            <person name="Gruissem W."/>
            <person name="Baginsky S."/>
        </authorList>
    </citation>
    <scope>PHOSPHORYLATION [LARGE SCALE ANALYSIS] AT SER-337</scope>
    <scope>IDENTIFICATION BY MASS SPECTROMETRY [LARGE SCALE ANALYSIS]</scope>
</reference>
<reference key="7">
    <citation type="journal article" date="2011" name="Front. Plant Sci.">
        <title>Protein-protein interaction network and subcellular localization of the Arabidopsis thaliana ESCRT machinery.</title>
        <authorList>
            <person name="Richardson L.G."/>
            <person name="Howard A.S."/>
            <person name="Khuu N."/>
            <person name="Gidda S.K."/>
            <person name="McCartney A."/>
            <person name="Morphy B.J."/>
            <person name="Mullen R.T."/>
        </authorList>
    </citation>
    <scope>GENE FAMILY</scope>
    <scope>NOMENCLATURE</scope>
</reference>
<reference key="8">
    <citation type="journal article" date="2012" name="Mol. Cell. Proteomics">
        <title>Comparative large-scale characterisation of plant vs. mammal proteins reveals similar and idiosyncratic N-alpha acetylation features.</title>
        <authorList>
            <person name="Bienvenut W.V."/>
            <person name="Sumpton D."/>
            <person name="Martinez A."/>
            <person name="Lilla S."/>
            <person name="Espagne C."/>
            <person name="Meinnel T."/>
            <person name="Giglione C."/>
        </authorList>
    </citation>
    <scope>ACETYLATION [LARGE SCALE ANALYSIS] AT GLY-2</scope>
    <scope>CLEAVAGE OF INITIATOR METHIONINE [LARGE SCALE ANALYSIS]</scope>
    <scope>IDENTIFICATION BY MASS SPECTROMETRY [LARGE SCALE ANALYSIS]</scope>
</reference>
<reference key="9">
    <citation type="journal article" date="2013" name="Curr. Biol.">
        <title>Arabidopsis TOL proteins act as gatekeepers for vacuolar sorting of PIN2 plasma membrane protein.</title>
        <authorList>
            <person name="Korbei B."/>
            <person name="Moulinier-Anzola J."/>
            <person name="De-Araujo L."/>
            <person name="Lucyshyn D."/>
            <person name="Retzer K."/>
            <person name="Khan M.A."/>
            <person name="Luschnig C."/>
        </authorList>
    </citation>
    <scope>GENE FAMILY</scope>
    <scope>NOMENCLATURE</scope>
    <scope>FUNCTION</scope>
</reference>
<reference key="10">
    <citation type="journal article" date="2014" name="Plant Signal. Behav.">
        <title>Expression of Arabidopsis TOL genes.</title>
        <authorList>
            <person name="Moulinier-Anzola J."/>
            <person name="De-Araujo L."/>
            <person name="Korbei B."/>
        </authorList>
    </citation>
    <scope>TISSUE SPECIFICITY</scope>
</reference>
<organism>
    <name type="scientific">Arabidopsis thaliana</name>
    <name type="common">Mouse-ear cress</name>
    <dbReference type="NCBI Taxonomy" id="3702"/>
    <lineage>
        <taxon>Eukaryota</taxon>
        <taxon>Viridiplantae</taxon>
        <taxon>Streptophyta</taxon>
        <taxon>Embryophyta</taxon>
        <taxon>Tracheophyta</taxon>
        <taxon>Spermatophyta</taxon>
        <taxon>Magnoliopsida</taxon>
        <taxon>eudicotyledons</taxon>
        <taxon>Gunneridae</taxon>
        <taxon>Pentapetalae</taxon>
        <taxon>rosids</taxon>
        <taxon>malvids</taxon>
        <taxon>Brassicales</taxon>
        <taxon>Brassicaceae</taxon>
        <taxon>Camelineae</taxon>
        <taxon>Arabidopsis</taxon>
    </lineage>
</organism>
<feature type="initiator methionine" description="Removed" evidence="12">
    <location>
        <position position="1"/>
    </location>
</feature>
<feature type="chain" id="PRO_0000440676" description="TOM1-like protein 1">
    <location>
        <begin position="2"/>
        <end position="407"/>
    </location>
</feature>
<feature type="domain" description="VHS" evidence="1">
    <location>
        <begin position="55"/>
        <end position="183"/>
    </location>
</feature>
<feature type="domain" description="GAT" evidence="2">
    <location>
        <begin position="228"/>
        <end position="315"/>
    </location>
</feature>
<feature type="region of interest" description="Disordered" evidence="3">
    <location>
        <begin position="315"/>
        <end position="407"/>
    </location>
</feature>
<feature type="compositionally biased region" description="Basic and acidic residues" evidence="3">
    <location>
        <begin position="337"/>
        <end position="347"/>
    </location>
</feature>
<feature type="compositionally biased region" description="Gly residues" evidence="3">
    <location>
        <begin position="353"/>
        <end position="364"/>
    </location>
</feature>
<feature type="compositionally biased region" description="Basic and acidic residues" evidence="3">
    <location>
        <begin position="388"/>
        <end position="407"/>
    </location>
</feature>
<feature type="modified residue" description="N-acetylglycine" evidence="12">
    <location>
        <position position="2"/>
    </location>
</feature>
<feature type="modified residue" description="Phosphoserine" evidence="11">
    <location>
        <position position="337"/>
    </location>
</feature>
<dbReference type="EMBL" id="AL391141">
    <property type="protein sequence ID" value="CAC01701.1"/>
    <property type="molecule type" value="Genomic_DNA"/>
</dbReference>
<dbReference type="EMBL" id="CP002688">
    <property type="protein sequence ID" value="AED92353.1"/>
    <property type="molecule type" value="Genomic_DNA"/>
</dbReference>
<dbReference type="EMBL" id="CP002688">
    <property type="protein sequence ID" value="AED92354.1"/>
    <property type="molecule type" value="Genomic_DNA"/>
</dbReference>
<dbReference type="EMBL" id="CP002688">
    <property type="protein sequence ID" value="ANM70041.1"/>
    <property type="molecule type" value="Genomic_DNA"/>
</dbReference>
<dbReference type="EMBL" id="AY056786">
    <property type="protein sequence ID" value="AAL10477.1"/>
    <property type="molecule type" value="mRNA"/>
</dbReference>
<dbReference type="EMBL" id="AY062640">
    <property type="protein sequence ID" value="AAL32718.1"/>
    <property type="molecule type" value="mRNA"/>
</dbReference>
<dbReference type="EMBL" id="BT002553">
    <property type="protein sequence ID" value="AAO00913.1"/>
    <property type="molecule type" value="mRNA"/>
</dbReference>
<dbReference type="EMBL" id="AY085140">
    <property type="protein sequence ID" value="AAM61693.1"/>
    <property type="molecule type" value="mRNA"/>
</dbReference>
<dbReference type="PIR" id="T51543">
    <property type="entry name" value="T51543"/>
</dbReference>
<dbReference type="RefSeq" id="NP_001331679.1">
    <molecule id="Q9LFL3-1"/>
    <property type="nucleotide sequence ID" value="NM_001343469.1"/>
</dbReference>
<dbReference type="RefSeq" id="NP_197190.1">
    <molecule id="Q9LFL3-1"/>
    <property type="nucleotide sequence ID" value="NM_121694.4"/>
</dbReference>
<dbReference type="RefSeq" id="NP_850833.1">
    <molecule id="Q9LFL3-1"/>
    <property type="nucleotide sequence ID" value="NM_180502.3"/>
</dbReference>
<dbReference type="SMR" id="Q9LFL3"/>
<dbReference type="FunCoup" id="Q9LFL3">
    <property type="interactions" value="1114"/>
</dbReference>
<dbReference type="IntAct" id="Q9LFL3">
    <property type="interactions" value="3"/>
</dbReference>
<dbReference type="STRING" id="3702.Q9LFL3"/>
<dbReference type="GlyGen" id="Q9LFL3">
    <property type="glycosylation" value="1 site"/>
</dbReference>
<dbReference type="iPTMnet" id="Q9LFL3"/>
<dbReference type="PaxDb" id="3702-AT5G16880.1"/>
<dbReference type="ProteomicsDB" id="234441">
    <molecule id="Q9LFL3-1"/>
</dbReference>
<dbReference type="EnsemblPlants" id="AT5G16880.1">
    <molecule id="Q9LFL3-1"/>
    <property type="protein sequence ID" value="AT5G16880.1"/>
    <property type="gene ID" value="AT5G16880"/>
</dbReference>
<dbReference type="EnsemblPlants" id="AT5G16880.2">
    <molecule id="Q9LFL3-1"/>
    <property type="protein sequence ID" value="AT5G16880.2"/>
    <property type="gene ID" value="AT5G16880"/>
</dbReference>
<dbReference type="EnsemblPlants" id="AT5G16880.4">
    <molecule id="Q9LFL3-1"/>
    <property type="protein sequence ID" value="AT5G16880.4"/>
    <property type="gene ID" value="AT5G16880"/>
</dbReference>
<dbReference type="GeneID" id="831551"/>
<dbReference type="Gramene" id="AT5G16880.1">
    <molecule id="Q9LFL3-1"/>
    <property type="protein sequence ID" value="AT5G16880.1"/>
    <property type="gene ID" value="AT5G16880"/>
</dbReference>
<dbReference type="Gramene" id="AT5G16880.2">
    <molecule id="Q9LFL3-1"/>
    <property type="protein sequence ID" value="AT5G16880.2"/>
    <property type="gene ID" value="AT5G16880"/>
</dbReference>
<dbReference type="Gramene" id="AT5G16880.4">
    <molecule id="Q9LFL3-1"/>
    <property type="protein sequence ID" value="AT5G16880.4"/>
    <property type="gene ID" value="AT5G16880"/>
</dbReference>
<dbReference type="KEGG" id="ath:AT5G16880"/>
<dbReference type="Araport" id="AT5G16880"/>
<dbReference type="TAIR" id="AT5G16880"/>
<dbReference type="eggNOG" id="KOG1087">
    <property type="taxonomic scope" value="Eukaryota"/>
</dbReference>
<dbReference type="HOGENOM" id="CLU_038212_2_0_1"/>
<dbReference type="InParanoid" id="Q9LFL3"/>
<dbReference type="OMA" id="QPEPAMI"/>
<dbReference type="OrthoDB" id="2018246at2759"/>
<dbReference type="PhylomeDB" id="Q9LFL3"/>
<dbReference type="PRO" id="PR:Q9LFL3"/>
<dbReference type="Proteomes" id="UP000006548">
    <property type="component" value="Chromosome 5"/>
</dbReference>
<dbReference type="ExpressionAtlas" id="Q9LFL3">
    <property type="expression patterns" value="baseline and differential"/>
</dbReference>
<dbReference type="GO" id="GO:0016020">
    <property type="term" value="C:membrane"/>
    <property type="evidence" value="ECO:0007669"/>
    <property type="project" value="UniProtKB-SubCell"/>
</dbReference>
<dbReference type="GO" id="GO:0009536">
    <property type="term" value="C:plastid"/>
    <property type="evidence" value="ECO:0007005"/>
    <property type="project" value="TAIR"/>
</dbReference>
<dbReference type="GO" id="GO:0035091">
    <property type="term" value="F:phosphatidylinositol binding"/>
    <property type="evidence" value="ECO:0007669"/>
    <property type="project" value="InterPro"/>
</dbReference>
<dbReference type="GO" id="GO:0043130">
    <property type="term" value="F:ubiquitin binding"/>
    <property type="evidence" value="ECO:0007669"/>
    <property type="project" value="InterPro"/>
</dbReference>
<dbReference type="GO" id="GO:0043328">
    <property type="term" value="P:protein transport to vacuole involved in ubiquitin-dependent protein catabolic process via the multivesicular body sorting pathway"/>
    <property type="evidence" value="ECO:0007669"/>
    <property type="project" value="InterPro"/>
</dbReference>
<dbReference type="CDD" id="cd14231">
    <property type="entry name" value="GAT_GGA-like_plant"/>
    <property type="match status" value="1"/>
</dbReference>
<dbReference type="CDD" id="cd03561">
    <property type="entry name" value="VHS"/>
    <property type="match status" value="1"/>
</dbReference>
<dbReference type="FunFam" id="1.25.40.90:FF:000038">
    <property type="entry name" value="TOM1-like protein 2"/>
    <property type="match status" value="1"/>
</dbReference>
<dbReference type="Gene3D" id="1.20.58.160">
    <property type="match status" value="1"/>
</dbReference>
<dbReference type="Gene3D" id="1.25.40.90">
    <property type="match status" value="1"/>
</dbReference>
<dbReference type="InterPro" id="IPR008942">
    <property type="entry name" value="ENTH_VHS"/>
</dbReference>
<dbReference type="InterPro" id="IPR004152">
    <property type="entry name" value="GAT_dom"/>
</dbReference>
<dbReference type="InterPro" id="IPR038425">
    <property type="entry name" value="GAT_sf"/>
</dbReference>
<dbReference type="InterPro" id="IPR044836">
    <property type="entry name" value="TOL_plant"/>
</dbReference>
<dbReference type="InterPro" id="IPR014645">
    <property type="entry name" value="TOM1"/>
</dbReference>
<dbReference type="InterPro" id="IPR002014">
    <property type="entry name" value="VHS_dom"/>
</dbReference>
<dbReference type="PANTHER" id="PTHR46646">
    <property type="entry name" value="TOM1-LIKE PROTEIN 1"/>
    <property type="match status" value="1"/>
</dbReference>
<dbReference type="PANTHER" id="PTHR46646:SF1">
    <property type="entry name" value="TOM1-LIKE PROTEIN 1"/>
    <property type="match status" value="1"/>
</dbReference>
<dbReference type="Pfam" id="PF03127">
    <property type="entry name" value="GAT"/>
    <property type="match status" value="1"/>
</dbReference>
<dbReference type="Pfam" id="PF00790">
    <property type="entry name" value="VHS"/>
    <property type="match status" value="1"/>
</dbReference>
<dbReference type="PIRSF" id="PIRSF036948">
    <property type="entry name" value="TOM1"/>
    <property type="match status" value="1"/>
</dbReference>
<dbReference type="SMART" id="SM00288">
    <property type="entry name" value="VHS"/>
    <property type="match status" value="1"/>
</dbReference>
<dbReference type="SUPFAM" id="SSF48464">
    <property type="entry name" value="ENTH/VHS domain"/>
    <property type="match status" value="1"/>
</dbReference>
<dbReference type="SUPFAM" id="SSF89009">
    <property type="entry name" value="GAT-like domain"/>
    <property type="match status" value="1"/>
</dbReference>
<dbReference type="PROSITE" id="PS50909">
    <property type="entry name" value="GAT"/>
    <property type="match status" value="1"/>
</dbReference>
<dbReference type="PROSITE" id="PS50179">
    <property type="entry name" value="VHS"/>
    <property type="match status" value="1"/>
</dbReference>
<gene>
    <name evidence="6" type="primary">TOL1</name>
    <name evidence="5" type="synonym">TOM_L</name>
    <name evidence="9" type="ordered locus">At5g16880</name>
    <name evidence="10" type="ORF">F2K13_30</name>
</gene>
<evidence type="ECO:0000255" key="1">
    <source>
        <dbReference type="PROSITE-ProRule" id="PRU00218"/>
    </source>
</evidence>
<evidence type="ECO:0000255" key="2">
    <source>
        <dbReference type="PROSITE-ProRule" id="PRU00373"/>
    </source>
</evidence>
<evidence type="ECO:0000256" key="3">
    <source>
        <dbReference type="SAM" id="MobiDB-lite"/>
    </source>
</evidence>
<evidence type="ECO:0000269" key="4">
    <source>
    </source>
</evidence>
<evidence type="ECO:0000303" key="5">
    <source>
    </source>
</evidence>
<evidence type="ECO:0000303" key="6">
    <source>
    </source>
</evidence>
<evidence type="ECO:0000305" key="7"/>
<evidence type="ECO:0000305" key="8">
    <source>
    </source>
</evidence>
<evidence type="ECO:0000312" key="9">
    <source>
        <dbReference type="Araport" id="AT5G16880"/>
    </source>
</evidence>
<evidence type="ECO:0000312" key="10">
    <source>
        <dbReference type="EMBL" id="CAC01701.1"/>
    </source>
</evidence>
<evidence type="ECO:0007744" key="11">
    <source>
    </source>
</evidence>
<evidence type="ECO:0007744" key="12">
    <source>
    </source>
</evidence>
<name>TOL1_ARATH</name>
<comment type="function">
    <text evidence="8">Might contribute to the loading of the ESCRT machinery.</text>
</comment>
<comment type="subcellular location">
    <subcellularLocation>
        <location evidence="7">Membrane</location>
        <topology evidence="7">Peripheral membrane protein</topology>
    </subcellularLocation>
</comment>
<comment type="alternative products">
    <event type="alternative splicing"/>
    <isoform>
        <id>Q9LFL3-1</id>
        <name>1</name>
        <sequence type="displayed"/>
    </isoform>
    <text evidence="7">Additional isoforms seem to exist.</text>
</comment>
<comment type="tissue specificity">
    <text evidence="4">Ubiquitously expressed.</text>
</comment>
<comment type="similarity">
    <text evidence="7">Belongs to the TOM1 family.</text>
</comment>